<organism>
    <name type="scientific">Paraburkholderia xenovorans (strain LB400)</name>
    <dbReference type="NCBI Taxonomy" id="266265"/>
    <lineage>
        <taxon>Bacteria</taxon>
        <taxon>Pseudomonadati</taxon>
        <taxon>Pseudomonadota</taxon>
        <taxon>Betaproteobacteria</taxon>
        <taxon>Burkholderiales</taxon>
        <taxon>Burkholderiaceae</taxon>
        <taxon>Paraburkholderia</taxon>
    </lineage>
</organism>
<comment type="function">
    <text evidence="1">3'-to-5' exoribonuclease specific for small oligoribonucleotides.</text>
</comment>
<comment type="subcellular location">
    <subcellularLocation>
        <location evidence="1">Cytoplasm</location>
    </subcellularLocation>
</comment>
<comment type="similarity">
    <text evidence="1">Belongs to the oligoribonuclease family.</text>
</comment>
<reference key="1">
    <citation type="journal article" date="2006" name="Proc. Natl. Acad. Sci. U.S.A.">
        <title>Burkholderia xenovorans LB400 harbors a multi-replicon, 9.73-Mbp genome shaped for versatility.</title>
        <authorList>
            <person name="Chain P.S.G."/>
            <person name="Denef V.J."/>
            <person name="Konstantinidis K.T."/>
            <person name="Vergez L.M."/>
            <person name="Agullo L."/>
            <person name="Reyes V.L."/>
            <person name="Hauser L."/>
            <person name="Cordova M."/>
            <person name="Gomez L."/>
            <person name="Gonzalez M."/>
            <person name="Land M."/>
            <person name="Lao V."/>
            <person name="Larimer F."/>
            <person name="LiPuma J.J."/>
            <person name="Mahenthiralingam E."/>
            <person name="Malfatti S.A."/>
            <person name="Marx C.J."/>
            <person name="Parnell J.J."/>
            <person name="Ramette A."/>
            <person name="Richardson P."/>
            <person name="Seeger M."/>
            <person name="Smith D."/>
            <person name="Spilker T."/>
            <person name="Sul W.J."/>
            <person name="Tsoi T.V."/>
            <person name="Ulrich L.E."/>
            <person name="Zhulin I.B."/>
            <person name="Tiedje J.M."/>
        </authorList>
    </citation>
    <scope>NUCLEOTIDE SEQUENCE [LARGE SCALE GENOMIC DNA]</scope>
    <source>
        <strain>LB400</strain>
    </source>
</reference>
<protein>
    <recommendedName>
        <fullName evidence="1">Oligoribonuclease</fullName>
        <ecNumber evidence="1">3.1.15.-</ecNumber>
    </recommendedName>
</protein>
<sequence length="207" mass="23541">MTDILASTEQPPLVRSDMNLVWLDMEMTGLEPDSDRIIEIAVVVTNSTLDRMVEGPVLAIHQSDETLAGMDQWNQNTHGRSGLIDRVKASTVSEADATEQIRDFLSVYVPPGKSPMCGNSICQDRRFMARWMPELERFFHYRNLDVSTLKELCRRWQPAIYKGFQKRAMHTALADIHESIDELKYYREHFLIPSAPDAANGAEKAAE</sequence>
<name>ORN_PARXL</name>
<keyword id="KW-0963">Cytoplasm</keyword>
<keyword id="KW-0269">Exonuclease</keyword>
<keyword id="KW-0378">Hydrolase</keyword>
<keyword id="KW-0540">Nuclease</keyword>
<keyword id="KW-1185">Reference proteome</keyword>
<dbReference type="EC" id="3.1.15.-" evidence="1"/>
<dbReference type="EMBL" id="CP000270">
    <property type="protein sequence ID" value="ABE31931.1"/>
    <property type="molecule type" value="Genomic_DNA"/>
</dbReference>
<dbReference type="RefSeq" id="WP_011489449.1">
    <property type="nucleotide sequence ID" value="NC_007951.1"/>
</dbReference>
<dbReference type="SMR" id="Q13VF8"/>
<dbReference type="STRING" id="266265.Bxe_A1016"/>
<dbReference type="KEGG" id="bxb:DR64_3178"/>
<dbReference type="KEGG" id="bxe:Bxe_A1016"/>
<dbReference type="PATRIC" id="fig|266265.5.peg.3564"/>
<dbReference type="eggNOG" id="COG1949">
    <property type="taxonomic scope" value="Bacteria"/>
</dbReference>
<dbReference type="OrthoDB" id="9801329at2"/>
<dbReference type="Proteomes" id="UP000001817">
    <property type="component" value="Chromosome 1"/>
</dbReference>
<dbReference type="GO" id="GO:0005737">
    <property type="term" value="C:cytoplasm"/>
    <property type="evidence" value="ECO:0007669"/>
    <property type="project" value="UniProtKB-SubCell"/>
</dbReference>
<dbReference type="GO" id="GO:0000175">
    <property type="term" value="F:3'-5'-RNA exonuclease activity"/>
    <property type="evidence" value="ECO:0007669"/>
    <property type="project" value="InterPro"/>
</dbReference>
<dbReference type="GO" id="GO:0003676">
    <property type="term" value="F:nucleic acid binding"/>
    <property type="evidence" value="ECO:0007669"/>
    <property type="project" value="InterPro"/>
</dbReference>
<dbReference type="GO" id="GO:0006259">
    <property type="term" value="P:DNA metabolic process"/>
    <property type="evidence" value="ECO:0007669"/>
    <property type="project" value="UniProtKB-ARBA"/>
</dbReference>
<dbReference type="CDD" id="cd06135">
    <property type="entry name" value="Orn"/>
    <property type="match status" value="1"/>
</dbReference>
<dbReference type="FunFam" id="3.30.420.10:FF:000003">
    <property type="entry name" value="Oligoribonuclease"/>
    <property type="match status" value="1"/>
</dbReference>
<dbReference type="Gene3D" id="3.30.420.10">
    <property type="entry name" value="Ribonuclease H-like superfamily/Ribonuclease H"/>
    <property type="match status" value="1"/>
</dbReference>
<dbReference type="HAMAP" id="MF_00045">
    <property type="entry name" value="Oligoribonuclease"/>
    <property type="match status" value="1"/>
</dbReference>
<dbReference type="InterPro" id="IPR013520">
    <property type="entry name" value="Exonuclease_RNaseT/DNA_pol3"/>
</dbReference>
<dbReference type="InterPro" id="IPR022894">
    <property type="entry name" value="Oligoribonuclease"/>
</dbReference>
<dbReference type="InterPro" id="IPR012337">
    <property type="entry name" value="RNaseH-like_sf"/>
</dbReference>
<dbReference type="InterPro" id="IPR036397">
    <property type="entry name" value="RNaseH_sf"/>
</dbReference>
<dbReference type="NCBIfam" id="NF003765">
    <property type="entry name" value="PRK05359.1"/>
    <property type="match status" value="1"/>
</dbReference>
<dbReference type="PANTHER" id="PTHR11046">
    <property type="entry name" value="OLIGORIBONUCLEASE, MITOCHONDRIAL"/>
    <property type="match status" value="1"/>
</dbReference>
<dbReference type="PANTHER" id="PTHR11046:SF0">
    <property type="entry name" value="OLIGORIBONUCLEASE, MITOCHONDRIAL"/>
    <property type="match status" value="1"/>
</dbReference>
<dbReference type="Pfam" id="PF00929">
    <property type="entry name" value="RNase_T"/>
    <property type="match status" value="1"/>
</dbReference>
<dbReference type="SMART" id="SM00479">
    <property type="entry name" value="EXOIII"/>
    <property type="match status" value="1"/>
</dbReference>
<dbReference type="SUPFAM" id="SSF53098">
    <property type="entry name" value="Ribonuclease H-like"/>
    <property type="match status" value="1"/>
</dbReference>
<accession>Q13VF8</accession>
<evidence type="ECO:0000255" key="1">
    <source>
        <dbReference type="HAMAP-Rule" id="MF_00045"/>
    </source>
</evidence>
<gene>
    <name evidence="1" type="primary">orn</name>
    <name type="ordered locus">Bxeno_A3393</name>
    <name type="ORF">Bxe_A1016</name>
</gene>
<feature type="chain" id="PRO_1000004242" description="Oligoribonuclease">
    <location>
        <begin position="1"/>
        <end position="207"/>
    </location>
</feature>
<feature type="domain" description="Exonuclease" evidence="1">
    <location>
        <begin position="20"/>
        <end position="183"/>
    </location>
</feature>
<feature type="active site" evidence="1">
    <location>
        <position position="141"/>
    </location>
</feature>
<proteinExistence type="inferred from homology"/>